<reference key="1">
    <citation type="submission" date="2003-03" db="EMBL/GenBank/DDBJ databases">
        <title>The complete genome sequence of Neisseria gonorrhoeae.</title>
        <authorList>
            <person name="Lewis L.A."/>
            <person name="Gillaspy A.F."/>
            <person name="McLaughlin R.E."/>
            <person name="Gipson M."/>
            <person name="Ducey T.F."/>
            <person name="Ownbey T."/>
            <person name="Hartman K."/>
            <person name="Nydick C."/>
            <person name="Carson M.B."/>
            <person name="Vaughn J."/>
            <person name="Thomson C."/>
            <person name="Song L."/>
            <person name="Lin S."/>
            <person name="Yuan X."/>
            <person name="Najar F."/>
            <person name="Zhan M."/>
            <person name="Ren Q."/>
            <person name="Zhu H."/>
            <person name="Qi S."/>
            <person name="Kenton S.M."/>
            <person name="Lai H."/>
            <person name="White J.D."/>
            <person name="Clifton S."/>
            <person name="Roe B.A."/>
            <person name="Dyer D.W."/>
        </authorList>
    </citation>
    <scope>NUCLEOTIDE SEQUENCE [LARGE SCALE GENOMIC DNA]</scope>
    <source>
        <strain>ATCC 700825 / FA 1090</strain>
    </source>
</reference>
<gene>
    <name evidence="1" type="primary">aroC</name>
    <name type="ordered locus">NGO_1331</name>
</gene>
<keyword id="KW-0028">Amino-acid biosynthesis</keyword>
<keyword id="KW-0057">Aromatic amino acid biosynthesis</keyword>
<keyword id="KW-0274">FAD</keyword>
<keyword id="KW-0285">Flavoprotein</keyword>
<keyword id="KW-0288">FMN</keyword>
<keyword id="KW-0456">Lyase</keyword>
<keyword id="KW-0521">NADP</keyword>
<keyword id="KW-1185">Reference proteome</keyword>
<protein>
    <recommendedName>
        <fullName evidence="1">Chorismate synthase</fullName>
        <shortName evidence="1">CS</shortName>
        <ecNumber evidence="1">4.2.3.5</ecNumber>
    </recommendedName>
    <alternativeName>
        <fullName evidence="1">5-enolpyruvylshikimate-3-phosphate phospholyase</fullName>
    </alternativeName>
</protein>
<accession>Q5F756</accession>
<comment type="function">
    <text evidence="1">Catalyzes the anti-1,4-elimination of the C-3 phosphate and the C-6 proR hydrogen from 5-enolpyruvylshikimate-3-phosphate (EPSP) to yield chorismate, which is the branch point compound that serves as the starting substrate for the three terminal pathways of aromatic amino acid biosynthesis. This reaction introduces a second double bond into the aromatic ring system.</text>
</comment>
<comment type="catalytic activity">
    <reaction evidence="1">
        <text>5-O-(1-carboxyvinyl)-3-phosphoshikimate = chorismate + phosphate</text>
        <dbReference type="Rhea" id="RHEA:21020"/>
        <dbReference type="ChEBI" id="CHEBI:29748"/>
        <dbReference type="ChEBI" id="CHEBI:43474"/>
        <dbReference type="ChEBI" id="CHEBI:57701"/>
        <dbReference type="EC" id="4.2.3.5"/>
    </reaction>
</comment>
<comment type="cofactor">
    <cofactor evidence="1">
        <name>FMNH2</name>
        <dbReference type="ChEBI" id="CHEBI:57618"/>
    </cofactor>
    <text evidence="1">Reduced FMN (FMNH(2)).</text>
</comment>
<comment type="pathway">
    <text evidence="1">Metabolic intermediate biosynthesis; chorismate biosynthesis; chorismate from D-erythrose 4-phosphate and phosphoenolpyruvate: step 7/7.</text>
</comment>
<comment type="subunit">
    <text evidence="1">Homotetramer.</text>
</comment>
<comment type="similarity">
    <text evidence="1">Belongs to the chorismate synthase family.</text>
</comment>
<organism>
    <name type="scientific">Neisseria gonorrhoeae (strain ATCC 700825 / FA 1090)</name>
    <dbReference type="NCBI Taxonomy" id="242231"/>
    <lineage>
        <taxon>Bacteria</taxon>
        <taxon>Pseudomonadati</taxon>
        <taxon>Pseudomonadota</taxon>
        <taxon>Betaproteobacteria</taxon>
        <taxon>Neisseriales</taxon>
        <taxon>Neisseriaceae</taxon>
        <taxon>Neisseria</taxon>
    </lineage>
</organism>
<sequence length="366" mass="39334">MAGNTFGQIFTVTTFGESHGAGLGCIIDGCPPGLELSEADIQFDLDRRKPGTSRHVTQRREADQVEILSGVFEGKTTGTPIALLIRNTDQRSKDYGNIATAFRPGHADYTYWHKYGTRDYRGGGRSSARETAARVAAGAVAKKWLKEKFGTEITAYVTQVGEKKIRFEGSEHISQNPFFAANQSQIAELEHYMDGVRKSLDSVGAKLHIEAANVPVGLGEPVFDRLDAEIAYAMMGINAVKGVEIGAGFDSVTQRGSEHGDELTPQGFLSNHSGGILGGISTGQDICVNIAIKPTSSIATPRRSIDIHGNPVELATRGRHDPCVGLRTAPIAEAMLALVLIDHALRHRAQNADVAADTPDISRSDK</sequence>
<proteinExistence type="inferred from homology"/>
<feature type="chain" id="PRO_0000140616" description="Chorismate synthase">
    <location>
        <begin position="1"/>
        <end position="366"/>
    </location>
</feature>
<feature type="binding site" evidence="1">
    <location>
        <position position="48"/>
    </location>
    <ligand>
        <name>NADP(+)</name>
        <dbReference type="ChEBI" id="CHEBI:58349"/>
    </ligand>
</feature>
<feature type="binding site" evidence="1">
    <location>
        <position position="54"/>
    </location>
    <ligand>
        <name>NADP(+)</name>
        <dbReference type="ChEBI" id="CHEBI:58349"/>
    </ligand>
</feature>
<feature type="binding site" evidence="1">
    <location>
        <begin position="125"/>
        <end position="127"/>
    </location>
    <ligand>
        <name>FMN</name>
        <dbReference type="ChEBI" id="CHEBI:58210"/>
    </ligand>
</feature>
<feature type="binding site" evidence="1">
    <location>
        <begin position="238"/>
        <end position="239"/>
    </location>
    <ligand>
        <name>FMN</name>
        <dbReference type="ChEBI" id="CHEBI:58210"/>
    </ligand>
</feature>
<feature type="binding site" evidence="1">
    <location>
        <position position="278"/>
    </location>
    <ligand>
        <name>FMN</name>
        <dbReference type="ChEBI" id="CHEBI:58210"/>
    </ligand>
</feature>
<feature type="binding site" evidence="1">
    <location>
        <begin position="293"/>
        <end position="297"/>
    </location>
    <ligand>
        <name>FMN</name>
        <dbReference type="ChEBI" id="CHEBI:58210"/>
    </ligand>
</feature>
<feature type="binding site" evidence="1">
    <location>
        <position position="319"/>
    </location>
    <ligand>
        <name>FMN</name>
        <dbReference type="ChEBI" id="CHEBI:58210"/>
    </ligand>
</feature>
<dbReference type="EC" id="4.2.3.5" evidence="1"/>
<dbReference type="EMBL" id="AE004969">
    <property type="protein sequence ID" value="AAW89981.1"/>
    <property type="molecule type" value="Genomic_DNA"/>
</dbReference>
<dbReference type="RefSeq" id="WP_003701548.1">
    <property type="nucleotide sequence ID" value="NC_002946.2"/>
</dbReference>
<dbReference type="RefSeq" id="YP_208393.1">
    <property type="nucleotide sequence ID" value="NC_002946.2"/>
</dbReference>
<dbReference type="SMR" id="Q5F756"/>
<dbReference type="STRING" id="242231.NGO_1331"/>
<dbReference type="KEGG" id="ngo:NGO_1331"/>
<dbReference type="PATRIC" id="fig|242231.10.peg.1565"/>
<dbReference type="HOGENOM" id="CLU_034547_0_2_4"/>
<dbReference type="UniPathway" id="UPA00053">
    <property type="reaction ID" value="UER00090"/>
</dbReference>
<dbReference type="Proteomes" id="UP000000535">
    <property type="component" value="Chromosome"/>
</dbReference>
<dbReference type="GO" id="GO:0005829">
    <property type="term" value="C:cytosol"/>
    <property type="evidence" value="ECO:0007669"/>
    <property type="project" value="TreeGrafter"/>
</dbReference>
<dbReference type="GO" id="GO:0004107">
    <property type="term" value="F:chorismate synthase activity"/>
    <property type="evidence" value="ECO:0007669"/>
    <property type="project" value="UniProtKB-UniRule"/>
</dbReference>
<dbReference type="GO" id="GO:0010181">
    <property type="term" value="F:FMN binding"/>
    <property type="evidence" value="ECO:0007669"/>
    <property type="project" value="TreeGrafter"/>
</dbReference>
<dbReference type="GO" id="GO:0008652">
    <property type="term" value="P:amino acid biosynthetic process"/>
    <property type="evidence" value="ECO:0007669"/>
    <property type="project" value="UniProtKB-KW"/>
</dbReference>
<dbReference type="GO" id="GO:0009073">
    <property type="term" value="P:aromatic amino acid family biosynthetic process"/>
    <property type="evidence" value="ECO:0007669"/>
    <property type="project" value="UniProtKB-KW"/>
</dbReference>
<dbReference type="GO" id="GO:0009423">
    <property type="term" value="P:chorismate biosynthetic process"/>
    <property type="evidence" value="ECO:0007669"/>
    <property type="project" value="UniProtKB-UniRule"/>
</dbReference>
<dbReference type="CDD" id="cd07304">
    <property type="entry name" value="Chorismate_synthase"/>
    <property type="match status" value="1"/>
</dbReference>
<dbReference type="FunFam" id="3.60.150.10:FF:000001">
    <property type="entry name" value="Chorismate synthase"/>
    <property type="match status" value="1"/>
</dbReference>
<dbReference type="Gene3D" id="3.60.150.10">
    <property type="entry name" value="Chorismate synthase AroC"/>
    <property type="match status" value="1"/>
</dbReference>
<dbReference type="HAMAP" id="MF_00300">
    <property type="entry name" value="Chorismate_synth"/>
    <property type="match status" value="1"/>
</dbReference>
<dbReference type="InterPro" id="IPR000453">
    <property type="entry name" value="Chorismate_synth"/>
</dbReference>
<dbReference type="InterPro" id="IPR035904">
    <property type="entry name" value="Chorismate_synth_AroC_sf"/>
</dbReference>
<dbReference type="InterPro" id="IPR020541">
    <property type="entry name" value="Chorismate_synthase_CS"/>
</dbReference>
<dbReference type="NCBIfam" id="TIGR00033">
    <property type="entry name" value="aroC"/>
    <property type="match status" value="1"/>
</dbReference>
<dbReference type="NCBIfam" id="NF003793">
    <property type="entry name" value="PRK05382.1"/>
    <property type="match status" value="1"/>
</dbReference>
<dbReference type="PANTHER" id="PTHR21085">
    <property type="entry name" value="CHORISMATE SYNTHASE"/>
    <property type="match status" value="1"/>
</dbReference>
<dbReference type="PANTHER" id="PTHR21085:SF0">
    <property type="entry name" value="CHORISMATE SYNTHASE"/>
    <property type="match status" value="1"/>
</dbReference>
<dbReference type="Pfam" id="PF01264">
    <property type="entry name" value="Chorismate_synt"/>
    <property type="match status" value="1"/>
</dbReference>
<dbReference type="PIRSF" id="PIRSF001456">
    <property type="entry name" value="Chorismate_synth"/>
    <property type="match status" value="1"/>
</dbReference>
<dbReference type="SUPFAM" id="SSF103263">
    <property type="entry name" value="Chorismate synthase, AroC"/>
    <property type="match status" value="1"/>
</dbReference>
<dbReference type="PROSITE" id="PS00787">
    <property type="entry name" value="CHORISMATE_SYNTHASE_1"/>
    <property type="match status" value="1"/>
</dbReference>
<dbReference type="PROSITE" id="PS00788">
    <property type="entry name" value="CHORISMATE_SYNTHASE_2"/>
    <property type="match status" value="1"/>
</dbReference>
<name>AROC_NEIG1</name>
<evidence type="ECO:0000255" key="1">
    <source>
        <dbReference type="HAMAP-Rule" id="MF_00300"/>
    </source>
</evidence>